<proteinExistence type="inferred from homology"/>
<protein>
    <recommendedName>
        <fullName evidence="1">Probable GTP-binding protein EngB</fullName>
    </recommendedName>
</protein>
<dbReference type="EMBL" id="CP000250">
    <property type="protein sequence ID" value="ABD05393.1"/>
    <property type="molecule type" value="Genomic_DNA"/>
</dbReference>
<dbReference type="RefSeq" id="WP_011439583.1">
    <property type="nucleotide sequence ID" value="NC_007778.1"/>
</dbReference>
<dbReference type="SMR" id="Q2J2B7"/>
<dbReference type="STRING" id="316058.RPB_0682"/>
<dbReference type="KEGG" id="rpb:RPB_0682"/>
<dbReference type="eggNOG" id="COG0218">
    <property type="taxonomic scope" value="Bacteria"/>
</dbReference>
<dbReference type="HOGENOM" id="CLU_033732_2_0_5"/>
<dbReference type="OrthoDB" id="9804921at2"/>
<dbReference type="Proteomes" id="UP000008809">
    <property type="component" value="Chromosome"/>
</dbReference>
<dbReference type="GO" id="GO:0005829">
    <property type="term" value="C:cytosol"/>
    <property type="evidence" value="ECO:0007669"/>
    <property type="project" value="TreeGrafter"/>
</dbReference>
<dbReference type="GO" id="GO:0005525">
    <property type="term" value="F:GTP binding"/>
    <property type="evidence" value="ECO:0007669"/>
    <property type="project" value="UniProtKB-UniRule"/>
</dbReference>
<dbReference type="GO" id="GO:0046872">
    <property type="term" value="F:metal ion binding"/>
    <property type="evidence" value="ECO:0007669"/>
    <property type="project" value="UniProtKB-KW"/>
</dbReference>
<dbReference type="GO" id="GO:0000917">
    <property type="term" value="P:division septum assembly"/>
    <property type="evidence" value="ECO:0007669"/>
    <property type="project" value="UniProtKB-KW"/>
</dbReference>
<dbReference type="CDD" id="cd01876">
    <property type="entry name" value="YihA_EngB"/>
    <property type="match status" value="1"/>
</dbReference>
<dbReference type="Gene3D" id="3.40.50.300">
    <property type="entry name" value="P-loop containing nucleotide triphosphate hydrolases"/>
    <property type="match status" value="1"/>
</dbReference>
<dbReference type="HAMAP" id="MF_00321">
    <property type="entry name" value="GTPase_EngB"/>
    <property type="match status" value="1"/>
</dbReference>
<dbReference type="InterPro" id="IPR030393">
    <property type="entry name" value="G_ENGB_dom"/>
</dbReference>
<dbReference type="InterPro" id="IPR006073">
    <property type="entry name" value="GTP-bd"/>
</dbReference>
<dbReference type="InterPro" id="IPR019987">
    <property type="entry name" value="GTP-bd_ribosome_bio_YsxC"/>
</dbReference>
<dbReference type="InterPro" id="IPR027417">
    <property type="entry name" value="P-loop_NTPase"/>
</dbReference>
<dbReference type="NCBIfam" id="TIGR03598">
    <property type="entry name" value="GTPase_YsxC"/>
    <property type="match status" value="1"/>
</dbReference>
<dbReference type="PANTHER" id="PTHR11649:SF13">
    <property type="entry name" value="ENGB-TYPE G DOMAIN-CONTAINING PROTEIN"/>
    <property type="match status" value="1"/>
</dbReference>
<dbReference type="PANTHER" id="PTHR11649">
    <property type="entry name" value="MSS1/TRME-RELATED GTP-BINDING PROTEIN"/>
    <property type="match status" value="1"/>
</dbReference>
<dbReference type="Pfam" id="PF01926">
    <property type="entry name" value="MMR_HSR1"/>
    <property type="match status" value="1"/>
</dbReference>
<dbReference type="SUPFAM" id="SSF52540">
    <property type="entry name" value="P-loop containing nucleoside triphosphate hydrolases"/>
    <property type="match status" value="1"/>
</dbReference>
<dbReference type="PROSITE" id="PS51706">
    <property type="entry name" value="G_ENGB"/>
    <property type="match status" value="1"/>
</dbReference>
<sequence>MTETIDPDLIERGRKTFAGDWHFIWASPSIETLPPMDGLEVAFAGRSNVGKSSLINALTGRNALARTSHTPGRTQELIFFDGPPGAGLRLVDMPGYGYAAASKAKVASWTSLIHKFLQGRATLARVYVLIDGRHGLKDVDLDILKTLDKAAVSYQIVLTKADQVKAAELAERVDATRTALAKHPAAFPELLTTSSRTGAGMPELRAAMIRLLDERR</sequence>
<name>ENGB_RHOP2</name>
<comment type="function">
    <text evidence="1">Necessary for normal cell division and for the maintenance of normal septation.</text>
</comment>
<comment type="cofactor">
    <cofactor evidence="1">
        <name>Mg(2+)</name>
        <dbReference type="ChEBI" id="CHEBI:18420"/>
    </cofactor>
</comment>
<comment type="similarity">
    <text evidence="1">Belongs to the TRAFAC class TrmE-Era-EngA-EngB-Septin-like GTPase superfamily. EngB GTPase family.</text>
</comment>
<keyword id="KW-0131">Cell cycle</keyword>
<keyword id="KW-0132">Cell division</keyword>
<keyword id="KW-0342">GTP-binding</keyword>
<keyword id="KW-0460">Magnesium</keyword>
<keyword id="KW-0479">Metal-binding</keyword>
<keyword id="KW-0547">Nucleotide-binding</keyword>
<keyword id="KW-1185">Reference proteome</keyword>
<keyword id="KW-0717">Septation</keyword>
<gene>
    <name evidence="1" type="primary">engB</name>
    <name type="ordered locus">RPB_0682</name>
</gene>
<evidence type="ECO:0000255" key="1">
    <source>
        <dbReference type="HAMAP-Rule" id="MF_00321"/>
    </source>
</evidence>
<accession>Q2J2B7</accession>
<organism>
    <name type="scientific">Rhodopseudomonas palustris (strain HaA2)</name>
    <dbReference type="NCBI Taxonomy" id="316058"/>
    <lineage>
        <taxon>Bacteria</taxon>
        <taxon>Pseudomonadati</taxon>
        <taxon>Pseudomonadota</taxon>
        <taxon>Alphaproteobacteria</taxon>
        <taxon>Hyphomicrobiales</taxon>
        <taxon>Nitrobacteraceae</taxon>
        <taxon>Rhodopseudomonas</taxon>
    </lineage>
</organism>
<feature type="chain" id="PRO_0000266933" description="Probable GTP-binding protein EngB">
    <location>
        <begin position="1"/>
        <end position="216"/>
    </location>
</feature>
<feature type="domain" description="EngB-type G" evidence="1">
    <location>
        <begin position="37"/>
        <end position="214"/>
    </location>
</feature>
<feature type="binding site" evidence="1">
    <location>
        <begin position="45"/>
        <end position="52"/>
    </location>
    <ligand>
        <name>GTP</name>
        <dbReference type="ChEBI" id="CHEBI:37565"/>
    </ligand>
</feature>
<feature type="binding site" evidence="1">
    <location>
        <position position="52"/>
    </location>
    <ligand>
        <name>Mg(2+)</name>
        <dbReference type="ChEBI" id="CHEBI:18420"/>
    </ligand>
</feature>
<feature type="binding site" evidence="1">
    <location>
        <begin position="72"/>
        <end position="76"/>
    </location>
    <ligand>
        <name>GTP</name>
        <dbReference type="ChEBI" id="CHEBI:37565"/>
    </ligand>
</feature>
<feature type="binding site" evidence="1">
    <location>
        <position position="74"/>
    </location>
    <ligand>
        <name>Mg(2+)</name>
        <dbReference type="ChEBI" id="CHEBI:18420"/>
    </ligand>
</feature>
<feature type="binding site" evidence="1">
    <location>
        <begin position="92"/>
        <end position="95"/>
    </location>
    <ligand>
        <name>GTP</name>
        <dbReference type="ChEBI" id="CHEBI:37565"/>
    </ligand>
</feature>
<feature type="binding site" evidence="1">
    <location>
        <begin position="159"/>
        <end position="162"/>
    </location>
    <ligand>
        <name>GTP</name>
        <dbReference type="ChEBI" id="CHEBI:37565"/>
    </ligand>
</feature>
<feature type="binding site" evidence="1">
    <location>
        <begin position="193"/>
        <end position="195"/>
    </location>
    <ligand>
        <name>GTP</name>
        <dbReference type="ChEBI" id="CHEBI:37565"/>
    </ligand>
</feature>
<reference key="1">
    <citation type="submission" date="2006-01" db="EMBL/GenBank/DDBJ databases">
        <title>Complete sequence of Rhodopseudomonas palustris HaA2.</title>
        <authorList>
            <consortium name="US DOE Joint Genome Institute"/>
            <person name="Copeland A."/>
            <person name="Lucas S."/>
            <person name="Lapidus A."/>
            <person name="Barry K."/>
            <person name="Detter J.C."/>
            <person name="Glavina T."/>
            <person name="Hammon N."/>
            <person name="Israni S."/>
            <person name="Pitluck S."/>
            <person name="Chain P."/>
            <person name="Malfatti S."/>
            <person name="Shin M."/>
            <person name="Vergez L."/>
            <person name="Schmutz J."/>
            <person name="Larimer F."/>
            <person name="Land M."/>
            <person name="Hauser L."/>
            <person name="Pelletier D.A."/>
            <person name="Kyrpides N."/>
            <person name="Anderson I."/>
            <person name="Oda Y."/>
            <person name="Harwood C.S."/>
            <person name="Richardson P."/>
        </authorList>
    </citation>
    <scope>NUCLEOTIDE SEQUENCE [LARGE SCALE GENOMIC DNA]</scope>
    <source>
        <strain>HaA2</strain>
    </source>
</reference>